<proteinExistence type="inferred from homology"/>
<organism>
    <name type="scientific">Fusarium vanettenii (strain ATCC MYA-4622 / CBS 123669 / FGSC 9596 / NRRL 45880 / 77-13-4)</name>
    <name type="common">Fusarium solani subsp. pisi</name>
    <dbReference type="NCBI Taxonomy" id="660122"/>
    <lineage>
        <taxon>Eukaryota</taxon>
        <taxon>Fungi</taxon>
        <taxon>Dikarya</taxon>
        <taxon>Ascomycota</taxon>
        <taxon>Pezizomycotina</taxon>
        <taxon>Sordariomycetes</taxon>
        <taxon>Hypocreomycetidae</taxon>
        <taxon>Hypocreales</taxon>
        <taxon>Nectriaceae</taxon>
        <taxon>Fusarium</taxon>
        <taxon>Fusarium solani species complex</taxon>
        <taxon>Fusarium vanettenii</taxon>
    </lineage>
</organism>
<sequence>MLRTSLRSVRVLGGRPSVAAAARQWPVAASRRAALVGQRHYAVDKKPESASSPSLPNTQSVASDKIHETTIDDVGETKAATVDAPKTTPPPPPPPPAPKKKGFFRRLRNFVFTLFVLGAVGFAGGVWYSCFSDNFHDFFTGYVPFGEQAVLYLEEMEYKKRFPNSATNAKSRDADGAVRIPAQSGASWRVADGTRRSSAGPVPAKQEEPKAEAPKPKAAEPKPTAKVVEKPAPTPAPAPTPRSESGFKAPEVNEPSRYPPLKPIDLLSLDDAREPVIQDLVHMVNDLILVINADGAHGRYGSSVNKAKNEITKVGGKLKGMKEQFEKKAAGQVRDKIDEFDKAATDLIDRVESAMITQESQWRHEFEEEMKKVRENYEDRVKVLLERERKLNEEKLQNQLLEQALALKKEFVKDVENQVEQERESRLGKLTALSSAVADLEKLTTGWNEVLDTNLQTQQLHVAVEAVRASLEDDHHPRPFIRELVALREIASDDPVVNAAIASVNPTAYQRGISTSSQLIDRFRRVANEVRKASLLPDEAGVASHASSWVLSHVMFKKQGLAEGNDVESVLTRTQTYLEEGDLDSAAREMNGLEGWAKTLSKDWLGEVRKVLEVQQALDVIATEARLQSLRVD</sequence>
<feature type="transit peptide" description="Mitochondrion" evidence="2">
    <location>
        <begin position="1"/>
        <end position="41"/>
    </location>
</feature>
<feature type="chain" id="PRO_0000406660" description="MICOS complex subunit MIC60">
    <location>
        <begin position="42"/>
        <end position="633"/>
    </location>
</feature>
<feature type="topological domain" description="Mitochondrial matrix" evidence="2">
    <location>
        <begin position="42"/>
        <end position="109"/>
    </location>
</feature>
<feature type="transmembrane region" description="Helical" evidence="2">
    <location>
        <begin position="110"/>
        <end position="130"/>
    </location>
</feature>
<feature type="topological domain" description="Mitochondrial intermembrane" evidence="2">
    <location>
        <begin position="131"/>
        <end position="633"/>
    </location>
</feature>
<feature type="region of interest" description="Disordered" evidence="3">
    <location>
        <begin position="40"/>
        <end position="100"/>
    </location>
</feature>
<feature type="region of interest" description="Disordered" evidence="3">
    <location>
        <begin position="164"/>
        <end position="259"/>
    </location>
</feature>
<feature type="coiled-coil region" evidence="2">
    <location>
        <begin position="304"/>
        <end position="421"/>
    </location>
</feature>
<feature type="compositionally biased region" description="Polar residues" evidence="3">
    <location>
        <begin position="49"/>
        <end position="62"/>
    </location>
</feature>
<feature type="compositionally biased region" description="Low complexity" evidence="3">
    <location>
        <begin position="77"/>
        <end position="86"/>
    </location>
</feature>
<feature type="compositionally biased region" description="Pro residues" evidence="3">
    <location>
        <begin position="87"/>
        <end position="97"/>
    </location>
</feature>
<feature type="compositionally biased region" description="Basic and acidic residues" evidence="3">
    <location>
        <begin position="205"/>
        <end position="220"/>
    </location>
</feature>
<comment type="function">
    <text evidence="1">Component of the MICOS complex, a large protein complex of the mitochondrial inner membrane that plays crucial roles in the maintenance of crista junctions, inner membrane architecture, and formation of contact sites to the outer membrane. Plays a role in keeping cristae membranes connected to the inner boundary membrane. Also promotes protein import via the mitochondrial intermembrane space assembly (MIA) pathway (By similarity).</text>
</comment>
<comment type="subunit">
    <text evidence="1">Component of the mitochondrial contact site and cristae organizing system (MICOS) complex.</text>
</comment>
<comment type="subcellular location">
    <subcellularLocation>
        <location evidence="1">Mitochondrion inner membrane</location>
        <topology evidence="1">Single-pass membrane protein</topology>
    </subcellularLocation>
</comment>
<comment type="similarity">
    <text evidence="4">Belongs to the MICOS complex subunit Mic60 family.</text>
</comment>
<reference key="1">
    <citation type="journal article" date="2009" name="PLoS Genet.">
        <title>The genome of Nectria haematococca: contribution of supernumerary chromosomes to gene expansion.</title>
        <authorList>
            <person name="Coleman J.J."/>
            <person name="Rounsley S.D."/>
            <person name="Rodriguez-Carres M."/>
            <person name="Kuo A."/>
            <person name="Wasmann C.C."/>
            <person name="Grimwood J."/>
            <person name="Schmutz J."/>
            <person name="Taga M."/>
            <person name="White G.J."/>
            <person name="Zhou S."/>
            <person name="Schwartz D.C."/>
            <person name="Freitag M."/>
            <person name="Ma L.-J."/>
            <person name="Danchin E.G.J."/>
            <person name="Henrissat B."/>
            <person name="Coutinho P.M."/>
            <person name="Nelson D.R."/>
            <person name="Straney D."/>
            <person name="Napoli C.A."/>
            <person name="Barker B.M."/>
            <person name="Gribskov M."/>
            <person name="Rep M."/>
            <person name="Kroken S."/>
            <person name="Molnar I."/>
            <person name="Rensing C."/>
            <person name="Kennell J.C."/>
            <person name="Zamora J."/>
            <person name="Farman M.L."/>
            <person name="Selker E.U."/>
            <person name="Salamov A."/>
            <person name="Shapiro H."/>
            <person name="Pangilinan J."/>
            <person name="Lindquist E."/>
            <person name="Lamers C."/>
            <person name="Grigoriev I.V."/>
            <person name="Geiser D.M."/>
            <person name="Covert S.F."/>
            <person name="Temporini E."/>
            <person name="VanEtten H.D."/>
        </authorList>
    </citation>
    <scope>NUCLEOTIDE SEQUENCE [LARGE SCALE GENOMIC DNA]</scope>
    <source>
        <strain>ATCC MYA-4622 / CBS 123669 / FGSC 9596 / NRRL 45880 / 77-13-4</strain>
    </source>
</reference>
<keyword id="KW-0175">Coiled coil</keyword>
<keyword id="KW-0472">Membrane</keyword>
<keyword id="KW-0496">Mitochondrion</keyword>
<keyword id="KW-0999">Mitochondrion inner membrane</keyword>
<keyword id="KW-1185">Reference proteome</keyword>
<keyword id="KW-0809">Transit peptide</keyword>
<keyword id="KW-0812">Transmembrane</keyword>
<keyword id="KW-1133">Transmembrane helix</keyword>
<evidence type="ECO:0000250" key="1"/>
<evidence type="ECO:0000255" key="2"/>
<evidence type="ECO:0000256" key="3">
    <source>
        <dbReference type="SAM" id="MobiDB-lite"/>
    </source>
</evidence>
<evidence type="ECO:0000305" key="4"/>
<gene>
    <name type="primary">MIC60</name>
    <name type="ORF">NECHADRAFT_75325</name>
</gene>
<protein>
    <recommendedName>
        <fullName>MICOS complex subunit MIC60</fullName>
    </recommendedName>
    <alternativeName>
        <fullName>Mitofilin</fullName>
    </alternativeName>
</protein>
<dbReference type="EMBL" id="GG698896">
    <property type="protein sequence ID" value="EEU48806.1"/>
    <property type="molecule type" value="Genomic_DNA"/>
</dbReference>
<dbReference type="RefSeq" id="XP_003054519.1">
    <property type="nucleotide sequence ID" value="XM_003054473.1"/>
</dbReference>
<dbReference type="SMR" id="C7YIH6"/>
<dbReference type="FunCoup" id="C7YIH6">
    <property type="interactions" value="184"/>
</dbReference>
<dbReference type="STRING" id="660122.C7YIH6"/>
<dbReference type="EnsemblFungi" id="NechaT75325">
    <property type="protein sequence ID" value="NechaP75325"/>
    <property type="gene ID" value="NechaG75325"/>
</dbReference>
<dbReference type="GeneID" id="9676440"/>
<dbReference type="KEGG" id="nhe:NECHADRAFT_75325"/>
<dbReference type="VEuPathDB" id="FungiDB:NECHADRAFT_75325"/>
<dbReference type="eggNOG" id="KOG1854">
    <property type="taxonomic scope" value="Eukaryota"/>
</dbReference>
<dbReference type="HOGENOM" id="CLU_008024_1_2_1"/>
<dbReference type="InParanoid" id="C7YIH6"/>
<dbReference type="OMA" id="RLDHQMQ"/>
<dbReference type="OrthoDB" id="10261039at2759"/>
<dbReference type="Proteomes" id="UP000005206">
    <property type="component" value="Unassembled WGS sequence"/>
</dbReference>
<dbReference type="GO" id="GO:0061617">
    <property type="term" value="C:MICOS complex"/>
    <property type="evidence" value="ECO:0007669"/>
    <property type="project" value="TreeGrafter"/>
</dbReference>
<dbReference type="GO" id="GO:0042407">
    <property type="term" value="P:cristae formation"/>
    <property type="evidence" value="ECO:0007669"/>
    <property type="project" value="TreeGrafter"/>
</dbReference>
<dbReference type="InterPro" id="IPR019133">
    <property type="entry name" value="MIC60"/>
</dbReference>
<dbReference type="PANTHER" id="PTHR15415:SF7">
    <property type="entry name" value="MICOS COMPLEX SUBUNIT MIC60"/>
    <property type="match status" value="1"/>
</dbReference>
<dbReference type="PANTHER" id="PTHR15415">
    <property type="entry name" value="MITOFILIN"/>
    <property type="match status" value="1"/>
</dbReference>
<dbReference type="Pfam" id="PF09731">
    <property type="entry name" value="Mitofilin"/>
    <property type="match status" value="2"/>
</dbReference>
<name>MIC60_FUSV7</name>
<accession>C7YIH6</accession>